<dbReference type="EMBL" id="CY026292">
    <property type="protein sequence ID" value="ABV82585.1"/>
    <property type="molecule type" value="Viral_cRNA"/>
</dbReference>
<dbReference type="SMR" id="A8C8W5"/>
<dbReference type="Proteomes" id="UP000116872">
    <property type="component" value="Genome"/>
</dbReference>
<dbReference type="GO" id="GO:0042025">
    <property type="term" value="C:host cell nucleus"/>
    <property type="evidence" value="ECO:0007669"/>
    <property type="project" value="UniProtKB-SubCell"/>
</dbReference>
<dbReference type="GO" id="GO:0016020">
    <property type="term" value="C:membrane"/>
    <property type="evidence" value="ECO:0007669"/>
    <property type="project" value="UniProtKB-KW"/>
</dbReference>
<dbReference type="GO" id="GO:0055036">
    <property type="term" value="C:virion membrane"/>
    <property type="evidence" value="ECO:0007669"/>
    <property type="project" value="UniProtKB-SubCell"/>
</dbReference>
<dbReference type="GO" id="GO:0003723">
    <property type="term" value="F:RNA binding"/>
    <property type="evidence" value="ECO:0007669"/>
    <property type="project" value="UniProtKB-UniRule"/>
</dbReference>
<dbReference type="GO" id="GO:0039660">
    <property type="term" value="F:structural constituent of virion"/>
    <property type="evidence" value="ECO:0007669"/>
    <property type="project" value="UniProtKB-UniRule"/>
</dbReference>
<dbReference type="GO" id="GO:0046761">
    <property type="term" value="P:viral budding from plasma membrane"/>
    <property type="evidence" value="ECO:0007669"/>
    <property type="project" value="UniProtKB-UniRule"/>
</dbReference>
<dbReference type="FunFam" id="1.10.10.180:FF:000001">
    <property type="entry name" value="Matrix protein 1"/>
    <property type="match status" value="1"/>
</dbReference>
<dbReference type="FunFam" id="1.20.91.10:FF:000001">
    <property type="entry name" value="Matrix protein 1"/>
    <property type="match status" value="1"/>
</dbReference>
<dbReference type="Gene3D" id="1.10.10.180">
    <property type="match status" value="1"/>
</dbReference>
<dbReference type="Gene3D" id="1.20.91.10">
    <property type="match status" value="1"/>
</dbReference>
<dbReference type="HAMAP" id="MF_04068">
    <property type="entry name" value="INFV_M1"/>
    <property type="match status" value="1"/>
</dbReference>
<dbReference type="InterPro" id="IPR036039">
    <property type="entry name" value="Flu_matrix_M1"/>
</dbReference>
<dbReference type="InterPro" id="IPR013188">
    <property type="entry name" value="Flu_matrix_M1_C"/>
</dbReference>
<dbReference type="InterPro" id="IPR001561">
    <property type="entry name" value="Flu_matrix_M1_N"/>
</dbReference>
<dbReference type="InterPro" id="IPR015423">
    <property type="entry name" value="Flu_matrix_M1_N_sub1"/>
</dbReference>
<dbReference type="InterPro" id="IPR015799">
    <property type="entry name" value="Flu_matrix_M1_N_sub2"/>
</dbReference>
<dbReference type="InterPro" id="IPR037533">
    <property type="entry name" value="INFV_M1"/>
</dbReference>
<dbReference type="Pfam" id="PF00598">
    <property type="entry name" value="Flu_M1"/>
    <property type="match status" value="1"/>
</dbReference>
<dbReference type="Pfam" id="PF08289">
    <property type="entry name" value="Flu_M1_C"/>
    <property type="match status" value="1"/>
</dbReference>
<dbReference type="SMART" id="SM00759">
    <property type="entry name" value="Flu_M1_C"/>
    <property type="match status" value="1"/>
</dbReference>
<dbReference type="SUPFAM" id="SSF48145">
    <property type="entry name" value="Influenza virus matrix protein M1"/>
    <property type="match status" value="1"/>
</dbReference>
<evidence type="ECO:0000255" key="1">
    <source>
        <dbReference type="HAMAP-Rule" id="MF_04068"/>
    </source>
</evidence>
<comment type="function">
    <text evidence="1">Plays critical roles in virus replication, from virus entry and uncoating to assembly and budding of the virus particle. M1 binding to ribonucleocapsids (RNPs) in nucleus seems to inhibit viral transcription. Interaction of viral NEP with M1-RNP is thought to promote nuclear export of the complex, which is targeted to the virion assembly site at the apical plasma membrane in polarized epithelial cells. Interactions with NA and HA may bring M1, a non-raft-associated protein, into lipid rafts. Forms a continuous shell on the inner side of the lipid bilayer in virion, where it binds the RNP. During virus entry into cell, the M2 ion channel acidifies the internal virion core, inducing M1 dissociation from the RNP. M1-free RNPs are transported to the nucleus, where viral transcription and replication can take place.</text>
</comment>
<comment type="function">
    <text evidence="1">Determines the virion's shape: spherical or filamentous. Clinical isolates of influenza are characterized by the presence of significant proportion of filamentous virions, whereas after multiple passage on eggs or cell culture, virions have only spherical morphology. Filamentous virions are thought to be important to infect neighboring cells, and spherical virions more suited to spread through aerosol between hosts organisms.</text>
</comment>
<comment type="subunit">
    <text evidence="1">Homodimer and homomultimer. Interacts with NEP. Binds ribonucleocapsid by both interacting with genomic RNA and NP protein. May interact with HA and NA. Cannot bind NP without genomic RNA.</text>
</comment>
<comment type="subcellular location">
    <subcellularLocation>
        <location evidence="1">Virion membrane</location>
        <topology evidence="1">Peripheral membrane protein</topology>
        <orientation evidence="1">Cytoplasmic side</orientation>
    </subcellularLocation>
    <subcellularLocation>
        <location evidence="1">Host nucleus</location>
    </subcellularLocation>
</comment>
<comment type="alternative products">
    <event type="alternative splicing"/>
    <isoform>
        <id>A8C8W5-1</id>
        <name>M1</name>
        <sequence type="displayed"/>
    </isoform>
    <isoform>
        <id>A8C8W4-1</id>
        <name>M2</name>
        <sequence type="external"/>
    </isoform>
    <text>Only the first 9 residues are shared by the 2 isoforms.</text>
</comment>
<comment type="miscellaneous">
    <text evidence="1">Most abundant protein in virion. When expressed alone can form virus-like particles in transfected cells.</text>
</comment>
<comment type="similarity">
    <text evidence="1">Belongs to the influenza viruses Matrix protein M1 family.</text>
</comment>
<gene>
    <name evidence="1" type="primary">M</name>
</gene>
<keyword id="KW-0025">Alternative splicing</keyword>
<keyword id="KW-1048">Host nucleus</keyword>
<keyword id="KW-0472">Membrane</keyword>
<keyword id="KW-0694">RNA-binding</keyword>
<keyword id="KW-0468">Viral matrix protein</keyword>
<keyword id="KW-0946">Virion</keyword>
<sequence>MSLLTEVETYVLSIVPSGPLKAEIAQRLEDVFAGKNTDLEALMEWLKTRPILSPLTKGILGFVFTLTVPSERGLQRRRFVQNALNGNGDPNNMDKAVKLYRKLKREITFHGAKEVALSYSAGALASCMGLIYNRMGTVTTEVAFGLVCATCEQIADSQHRSHRQMVTTTNPLIRHENRMVLASTTAKAMEQMAGSSEQAAEAMEVASQARQMVQAMRTIGTHPSSSAGLKDDLLENLQAYQKRMGVQMQRFK</sequence>
<accession>A8C8W5</accession>
<feature type="chain" id="PRO_0000372909" description="Matrix protein 1">
    <location>
        <begin position="1"/>
        <end position="252"/>
    </location>
</feature>
<feature type="region of interest" description="Membrane-binding" evidence="1">
    <location>
        <begin position="1"/>
        <end position="164"/>
    </location>
</feature>
<feature type="region of interest" description="RNP-binding" evidence="1">
    <location>
        <begin position="165"/>
        <end position="252"/>
    </location>
</feature>
<feature type="short sequence motif" description="Nuclear localization signal" evidence="1">
    <location>
        <begin position="101"/>
        <end position="105"/>
    </location>
</feature>
<organism>
    <name type="scientific">Influenza A virus (strain A/Swine/Wisconsin/1/1967 H1N1)</name>
    <dbReference type="NCBI Taxonomy" id="382855"/>
    <lineage>
        <taxon>Viruses</taxon>
        <taxon>Riboviria</taxon>
        <taxon>Orthornavirae</taxon>
        <taxon>Negarnaviricota</taxon>
        <taxon>Polyploviricotina</taxon>
        <taxon>Insthoviricetes</taxon>
        <taxon>Articulavirales</taxon>
        <taxon>Orthomyxoviridae</taxon>
        <taxon>Alphainfluenzavirus</taxon>
        <taxon>Alphainfluenzavirus influenzae</taxon>
        <taxon>Influenza A virus</taxon>
    </lineage>
</organism>
<name>M1_I67A2</name>
<proteinExistence type="inferred from homology"/>
<protein>
    <recommendedName>
        <fullName evidence="1">Matrix protein 1</fullName>
        <shortName evidence="1">M1</shortName>
    </recommendedName>
</protein>
<reference key="1">
    <citation type="submission" date="2007-10" db="EMBL/GenBank/DDBJ databases">
        <title>The NIAID influenza genome sequencing project.</title>
        <authorList>
            <person name="Ghedin E."/>
            <person name="Spiro D."/>
            <person name="Miller N."/>
            <person name="Zaborsky J."/>
            <person name="Feldblyum T."/>
            <person name="Subbu V."/>
            <person name="Shumway M."/>
            <person name="Sparenborg J."/>
            <person name="Groveman L."/>
            <person name="Halpin R."/>
            <person name="Sitz J."/>
            <person name="Koo H."/>
            <person name="Salzberg S.L."/>
            <person name="Webster R.G."/>
            <person name="Hoffmann E."/>
            <person name="Krauss S."/>
            <person name="Naeve C."/>
            <person name="Bao Y."/>
            <person name="Bolotov P."/>
            <person name="Dernovoy D."/>
            <person name="Kiryutin B."/>
            <person name="Lipman D.J."/>
            <person name="Tatusova T."/>
        </authorList>
    </citation>
    <scope>NUCLEOTIDE SEQUENCE [GENOMIC RNA]</scope>
</reference>
<reference key="2">
    <citation type="submission" date="2007-10" db="EMBL/GenBank/DDBJ databases">
        <authorList>
            <consortium name="The NIAID Influenza Genome Sequencing Consortium"/>
        </authorList>
    </citation>
    <scope>NUCLEOTIDE SEQUENCE [GENOMIC RNA]</scope>
</reference>
<organismHost>
    <name type="scientific">Aves</name>
    <dbReference type="NCBI Taxonomy" id="8782"/>
</organismHost>
<organismHost>
    <name type="scientific">Homo sapiens</name>
    <name type="common">Human</name>
    <dbReference type="NCBI Taxonomy" id="9606"/>
</organismHost>
<organismHost>
    <name type="scientific">Sus scrofa</name>
    <name type="common">Pig</name>
    <dbReference type="NCBI Taxonomy" id="9823"/>
</organismHost>